<comment type="function">
    <text evidence="1">Catalyzes the reversible adenylation of nicotinate mononucleotide (NaMN) to nicotinic acid adenine dinucleotide (NaAD).</text>
</comment>
<comment type="catalytic activity">
    <reaction evidence="1">
        <text>nicotinate beta-D-ribonucleotide + ATP + H(+) = deamido-NAD(+) + diphosphate</text>
        <dbReference type="Rhea" id="RHEA:22860"/>
        <dbReference type="ChEBI" id="CHEBI:15378"/>
        <dbReference type="ChEBI" id="CHEBI:30616"/>
        <dbReference type="ChEBI" id="CHEBI:33019"/>
        <dbReference type="ChEBI" id="CHEBI:57502"/>
        <dbReference type="ChEBI" id="CHEBI:58437"/>
        <dbReference type="EC" id="2.7.7.18"/>
    </reaction>
</comment>
<comment type="pathway">
    <text evidence="1">Cofactor biosynthesis; NAD(+) biosynthesis; deamido-NAD(+) from nicotinate D-ribonucleotide: step 1/1.</text>
</comment>
<comment type="similarity">
    <text evidence="1">Belongs to the NadD family.</text>
</comment>
<accession>Q6AFX7</accession>
<protein>
    <recommendedName>
        <fullName evidence="1">Probable nicotinate-nucleotide adenylyltransferase</fullName>
        <ecNumber evidence="1">2.7.7.18</ecNumber>
    </recommendedName>
    <alternativeName>
        <fullName evidence="1">Deamido-NAD(+) diphosphorylase</fullName>
    </alternativeName>
    <alternativeName>
        <fullName evidence="1">Deamido-NAD(+) pyrophosphorylase</fullName>
    </alternativeName>
    <alternativeName>
        <fullName evidence="1">Nicotinate mononucleotide adenylyltransferase</fullName>
        <shortName evidence="1">NaMN adenylyltransferase</shortName>
    </alternativeName>
</protein>
<dbReference type="EC" id="2.7.7.18" evidence="1"/>
<dbReference type="EMBL" id="AE016822">
    <property type="protein sequence ID" value="AAT88718.1"/>
    <property type="molecule type" value="Genomic_DNA"/>
</dbReference>
<dbReference type="RefSeq" id="WP_011185716.1">
    <property type="nucleotide sequence ID" value="NC_006087.1"/>
</dbReference>
<dbReference type="SMR" id="Q6AFX7"/>
<dbReference type="STRING" id="281090.Lxx08100"/>
<dbReference type="KEGG" id="lxx:Lxx08100"/>
<dbReference type="eggNOG" id="COG1057">
    <property type="taxonomic scope" value="Bacteria"/>
</dbReference>
<dbReference type="HOGENOM" id="CLU_069765_1_1_11"/>
<dbReference type="UniPathway" id="UPA00253">
    <property type="reaction ID" value="UER00332"/>
</dbReference>
<dbReference type="Proteomes" id="UP000001306">
    <property type="component" value="Chromosome"/>
</dbReference>
<dbReference type="GO" id="GO:0005524">
    <property type="term" value="F:ATP binding"/>
    <property type="evidence" value="ECO:0007669"/>
    <property type="project" value="UniProtKB-KW"/>
</dbReference>
<dbReference type="GO" id="GO:0004515">
    <property type="term" value="F:nicotinate-nucleotide adenylyltransferase activity"/>
    <property type="evidence" value="ECO:0007669"/>
    <property type="project" value="UniProtKB-UniRule"/>
</dbReference>
<dbReference type="GO" id="GO:0009435">
    <property type="term" value="P:NAD biosynthetic process"/>
    <property type="evidence" value="ECO:0007669"/>
    <property type="project" value="UniProtKB-UniRule"/>
</dbReference>
<dbReference type="CDD" id="cd02165">
    <property type="entry name" value="NMNAT"/>
    <property type="match status" value="1"/>
</dbReference>
<dbReference type="FunFam" id="3.40.50.620:FF:000039">
    <property type="entry name" value="Probable nicotinate-nucleotide adenylyltransferase"/>
    <property type="match status" value="1"/>
</dbReference>
<dbReference type="Gene3D" id="3.40.50.620">
    <property type="entry name" value="HUPs"/>
    <property type="match status" value="1"/>
</dbReference>
<dbReference type="HAMAP" id="MF_00244">
    <property type="entry name" value="NaMN_adenylyltr"/>
    <property type="match status" value="1"/>
</dbReference>
<dbReference type="InterPro" id="IPR004821">
    <property type="entry name" value="Cyt_trans-like"/>
</dbReference>
<dbReference type="InterPro" id="IPR005248">
    <property type="entry name" value="NadD/NMNAT"/>
</dbReference>
<dbReference type="InterPro" id="IPR014729">
    <property type="entry name" value="Rossmann-like_a/b/a_fold"/>
</dbReference>
<dbReference type="NCBIfam" id="TIGR00125">
    <property type="entry name" value="cyt_tran_rel"/>
    <property type="match status" value="1"/>
</dbReference>
<dbReference type="NCBIfam" id="TIGR00482">
    <property type="entry name" value="nicotinate (nicotinamide) nucleotide adenylyltransferase"/>
    <property type="match status" value="1"/>
</dbReference>
<dbReference type="NCBIfam" id="NF000840">
    <property type="entry name" value="PRK00071.1-3"/>
    <property type="match status" value="1"/>
</dbReference>
<dbReference type="PANTHER" id="PTHR39321">
    <property type="entry name" value="NICOTINATE-NUCLEOTIDE ADENYLYLTRANSFERASE-RELATED"/>
    <property type="match status" value="1"/>
</dbReference>
<dbReference type="PANTHER" id="PTHR39321:SF3">
    <property type="entry name" value="PHOSPHOPANTETHEINE ADENYLYLTRANSFERASE"/>
    <property type="match status" value="1"/>
</dbReference>
<dbReference type="Pfam" id="PF01467">
    <property type="entry name" value="CTP_transf_like"/>
    <property type="match status" value="1"/>
</dbReference>
<dbReference type="SUPFAM" id="SSF52374">
    <property type="entry name" value="Nucleotidylyl transferase"/>
    <property type="match status" value="1"/>
</dbReference>
<keyword id="KW-0067">ATP-binding</keyword>
<keyword id="KW-0520">NAD</keyword>
<keyword id="KW-0547">Nucleotide-binding</keyword>
<keyword id="KW-0548">Nucleotidyltransferase</keyword>
<keyword id="KW-0662">Pyridine nucleotide biosynthesis</keyword>
<keyword id="KW-1185">Reference proteome</keyword>
<keyword id="KW-0808">Transferase</keyword>
<reference key="1">
    <citation type="journal article" date="2004" name="Mol. Plant Microbe Interact.">
        <title>The genome sequence of the Gram-positive sugarcane pathogen Leifsonia xyli subsp. xyli.</title>
        <authorList>
            <person name="Monteiro-Vitorello C.B."/>
            <person name="Camargo L.E.A."/>
            <person name="Van Sluys M.A."/>
            <person name="Kitajima J.P."/>
            <person name="Truffi D."/>
            <person name="do Amaral A.M."/>
            <person name="Harakava R."/>
            <person name="de Oliveira J.C.F."/>
            <person name="Wood D."/>
            <person name="de Oliveira M.C."/>
            <person name="Miyaki C.Y."/>
            <person name="Takita M.A."/>
            <person name="da Silva A.C.R."/>
            <person name="Furlan L.R."/>
            <person name="Carraro D.M."/>
            <person name="Camarotte G."/>
            <person name="Almeida N.F. Jr."/>
            <person name="Carrer H."/>
            <person name="Coutinho L.L."/>
            <person name="El-Dorry H.A."/>
            <person name="Ferro M.I.T."/>
            <person name="Gagliardi P.R."/>
            <person name="Giglioti E."/>
            <person name="Goldman M.H.S."/>
            <person name="Goldman G.H."/>
            <person name="Kimura E.T."/>
            <person name="Ferro E.S."/>
            <person name="Kuramae E.E."/>
            <person name="Lemos E.G.M."/>
            <person name="Lemos M.V.F."/>
            <person name="Mauro S.M.Z."/>
            <person name="Machado M.A."/>
            <person name="Marino C.L."/>
            <person name="Menck C.F."/>
            <person name="Nunes L.R."/>
            <person name="Oliveira R.C."/>
            <person name="Pereira G.G."/>
            <person name="Siqueira W."/>
            <person name="de Souza A.A."/>
            <person name="Tsai S.M."/>
            <person name="Zanca A.S."/>
            <person name="Simpson A.J.G."/>
            <person name="Brumbley S.M."/>
            <person name="Setubal J.C."/>
        </authorList>
    </citation>
    <scope>NUCLEOTIDE SEQUENCE [LARGE SCALE GENOMIC DNA]</scope>
    <source>
        <strain>CTCB07</strain>
    </source>
</reference>
<evidence type="ECO:0000255" key="1">
    <source>
        <dbReference type="HAMAP-Rule" id="MF_00244"/>
    </source>
</evidence>
<sequence>MELTEKSRPRIGVMGGTFDPIHHGHLVAASEVAQSFDLDEVVFVPTGRPWQKGAVTPAEHRYLMTVIATASNPRFTVSRVDVDRIGPTYTIDTLRDLHEERPEAELFFITGADAIAQILSWRDVEELWKLAHFVAVSRPGHDLSISGLPQQDVSLLEVPALAISSTDCRDRVNRGMPVWYLVPDGVVQYISKHHLYRSVA</sequence>
<feature type="chain" id="PRO_0000181419" description="Probable nicotinate-nucleotide adenylyltransferase">
    <location>
        <begin position="1"/>
        <end position="200"/>
    </location>
</feature>
<name>NADD_LEIXX</name>
<organism>
    <name type="scientific">Leifsonia xyli subsp. xyli (strain CTCB07)</name>
    <dbReference type="NCBI Taxonomy" id="281090"/>
    <lineage>
        <taxon>Bacteria</taxon>
        <taxon>Bacillati</taxon>
        <taxon>Actinomycetota</taxon>
        <taxon>Actinomycetes</taxon>
        <taxon>Micrococcales</taxon>
        <taxon>Microbacteriaceae</taxon>
        <taxon>Leifsonia</taxon>
    </lineage>
</organism>
<proteinExistence type="inferred from homology"/>
<gene>
    <name evidence="1" type="primary">nadD</name>
    <name type="ordered locus">Lxx08100</name>
</gene>